<comment type="function">
    <text evidence="1">Endonuclease that specifically degrades the RNA of RNA-DNA hybrids.</text>
</comment>
<comment type="catalytic activity">
    <reaction evidence="1">
        <text>Endonucleolytic cleavage to 5'-phosphomonoester.</text>
        <dbReference type="EC" id="3.1.26.4"/>
    </reaction>
</comment>
<comment type="cofactor">
    <cofactor evidence="1">
        <name>Mn(2+)</name>
        <dbReference type="ChEBI" id="CHEBI:29035"/>
    </cofactor>
    <cofactor evidence="1">
        <name>Mg(2+)</name>
        <dbReference type="ChEBI" id="CHEBI:18420"/>
    </cofactor>
    <text evidence="1">Manganese or magnesium. Binds 1 divalent metal ion per monomer in the absence of substrate. May bind a second metal ion after substrate binding.</text>
</comment>
<comment type="subcellular location">
    <subcellularLocation>
        <location evidence="1">Cytoplasm</location>
    </subcellularLocation>
</comment>
<comment type="similarity">
    <text evidence="1">Belongs to the RNase HII family.</text>
</comment>
<keyword id="KW-0963">Cytoplasm</keyword>
<keyword id="KW-0255">Endonuclease</keyword>
<keyword id="KW-0378">Hydrolase</keyword>
<keyword id="KW-0464">Manganese</keyword>
<keyword id="KW-0479">Metal-binding</keyword>
<keyword id="KW-0540">Nuclease</keyword>
<keyword id="KW-1185">Reference proteome</keyword>
<protein>
    <recommendedName>
        <fullName evidence="1">Ribonuclease HII</fullName>
        <shortName evidence="1">RNase HII</shortName>
        <ecNumber evidence="1">3.1.26.4</ecNumber>
    </recommendedName>
</protein>
<evidence type="ECO:0000255" key="1">
    <source>
        <dbReference type="HAMAP-Rule" id="MF_00052"/>
    </source>
</evidence>
<evidence type="ECO:0000255" key="2">
    <source>
        <dbReference type="PROSITE-ProRule" id="PRU01319"/>
    </source>
</evidence>
<organism>
    <name type="scientific">Paraburkholderia xenovorans (strain LB400)</name>
    <dbReference type="NCBI Taxonomy" id="266265"/>
    <lineage>
        <taxon>Bacteria</taxon>
        <taxon>Pseudomonadati</taxon>
        <taxon>Pseudomonadota</taxon>
        <taxon>Betaproteobacteria</taxon>
        <taxon>Burkholderiales</taxon>
        <taxon>Burkholderiaceae</taxon>
        <taxon>Paraburkholderia</taxon>
    </lineage>
</organism>
<dbReference type="EC" id="3.1.26.4" evidence="1"/>
<dbReference type="EMBL" id="CP000270">
    <property type="protein sequence ID" value="ABE31259.1"/>
    <property type="molecule type" value="Genomic_DNA"/>
</dbReference>
<dbReference type="RefSeq" id="WP_011488855.1">
    <property type="nucleotide sequence ID" value="NC_007951.1"/>
</dbReference>
<dbReference type="SMR" id="Q13XD0"/>
<dbReference type="STRING" id="266265.Bxe_A1696"/>
<dbReference type="KEGG" id="bxb:DR64_3861"/>
<dbReference type="KEGG" id="bxe:Bxe_A1696"/>
<dbReference type="PATRIC" id="fig|266265.5.peg.2851"/>
<dbReference type="eggNOG" id="COG0164">
    <property type="taxonomic scope" value="Bacteria"/>
</dbReference>
<dbReference type="OrthoDB" id="9803420at2"/>
<dbReference type="Proteomes" id="UP000001817">
    <property type="component" value="Chromosome 1"/>
</dbReference>
<dbReference type="GO" id="GO:0005737">
    <property type="term" value="C:cytoplasm"/>
    <property type="evidence" value="ECO:0007669"/>
    <property type="project" value="UniProtKB-SubCell"/>
</dbReference>
<dbReference type="GO" id="GO:0032299">
    <property type="term" value="C:ribonuclease H2 complex"/>
    <property type="evidence" value="ECO:0007669"/>
    <property type="project" value="TreeGrafter"/>
</dbReference>
<dbReference type="GO" id="GO:0030145">
    <property type="term" value="F:manganese ion binding"/>
    <property type="evidence" value="ECO:0007669"/>
    <property type="project" value="UniProtKB-UniRule"/>
</dbReference>
<dbReference type="GO" id="GO:0003723">
    <property type="term" value="F:RNA binding"/>
    <property type="evidence" value="ECO:0007669"/>
    <property type="project" value="InterPro"/>
</dbReference>
<dbReference type="GO" id="GO:0004523">
    <property type="term" value="F:RNA-DNA hybrid ribonuclease activity"/>
    <property type="evidence" value="ECO:0007669"/>
    <property type="project" value="UniProtKB-UniRule"/>
</dbReference>
<dbReference type="GO" id="GO:0043137">
    <property type="term" value="P:DNA replication, removal of RNA primer"/>
    <property type="evidence" value="ECO:0007669"/>
    <property type="project" value="TreeGrafter"/>
</dbReference>
<dbReference type="GO" id="GO:0006298">
    <property type="term" value="P:mismatch repair"/>
    <property type="evidence" value="ECO:0007669"/>
    <property type="project" value="TreeGrafter"/>
</dbReference>
<dbReference type="CDD" id="cd07182">
    <property type="entry name" value="RNase_HII_bacteria_HII_like"/>
    <property type="match status" value="1"/>
</dbReference>
<dbReference type="FunFam" id="3.30.420.10:FF:000006">
    <property type="entry name" value="Ribonuclease HII"/>
    <property type="match status" value="1"/>
</dbReference>
<dbReference type="Gene3D" id="3.30.420.10">
    <property type="entry name" value="Ribonuclease H-like superfamily/Ribonuclease H"/>
    <property type="match status" value="1"/>
</dbReference>
<dbReference type="HAMAP" id="MF_00052_B">
    <property type="entry name" value="RNase_HII_B"/>
    <property type="match status" value="1"/>
</dbReference>
<dbReference type="InterPro" id="IPR022898">
    <property type="entry name" value="RNase_HII"/>
</dbReference>
<dbReference type="InterPro" id="IPR001352">
    <property type="entry name" value="RNase_HII/HIII"/>
</dbReference>
<dbReference type="InterPro" id="IPR024567">
    <property type="entry name" value="RNase_HII/HIII_dom"/>
</dbReference>
<dbReference type="InterPro" id="IPR012337">
    <property type="entry name" value="RNaseH-like_sf"/>
</dbReference>
<dbReference type="InterPro" id="IPR036397">
    <property type="entry name" value="RNaseH_sf"/>
</dbReference>
<dbReference type="NCBIfam" id="NF000595">
    <property type="entry name" value="PRK00015.1-3"/>
    <property type="match status" value="1"/>
</dbReference>
<dbReference type="NCBIfam" id="NF000596">
    <property type="entry name" value="PRK00015.1-4"/>
    <property type="match status" value="1"/>
</dbReference>
<dbReference type="PANTHER" id="PTHR10954">
    <property type="entry name" value="RIBONUCLEASE H2 SUBUNIT A"/>
    <property type="match status" value="1"/>
</dbReference>
<dbReference type="PANTHER" id="PTHR10954:SF18">
    <property type="entry name" value="RIBONUCLEASE HII"/>
    <property type="match status" value="1"/>
</dbReference>
<dbReference type="Pfam" id="PF01351">
    <property type="entry name" value="RNase_HII"/>
    <property type="match status" value="1"/>
</dbReference>
<dbReference type="SUPFAM" id="SSF53098">
    <property type="entry name" value="Ribonuclease H-like"/>
    <property type="match status" value="1"/>
</dbReference>
<dbReference type="PROSITE" id="PS51975">
    <property type="entry name" value="RNASE_H_2"/>
    <property type="match status" value="1"/>
</dbReference>
<proteinExistence type="inferred from homology"/>
<reference key="1">
    <citation type="journal article" date="2006" name="Proc. Natl. Acad. Sci. U.S.A.">
        <title>Burkholderia xenovorans LB400 harbors a multi-replicon, 9.73-Mbp genome shaped for versatility.</title>
        <authorList>
            <person name="Chain P.S.G."/>
            <person name="Denef V.J."/>
            <person name="Konstantinidis K.T."/>
            <person name="Vergez L.M."/>
            <person name="Agullo L."/>
            <person name="Reyes V.L."/>
            <person name="Hauser L."/>
            <person name="Cordova M."/>
            <person name="Gomez L."/>
            <person name="Gonzalez M."/>
            <person name="Land M."/>
            <person name="Lao V."/>
            <person name="Larimer F."/>
            <person name="LiPuma J.J."/>
            <person name="Mahenthiralingam E."/>
            <person name="Malfatti S.A."/>
            <person name="Marx C.J."/>
            <person name="Parnell J.J."/>
            <person name="Ramette A."/>
            <person name="Richardson P."/>
            <person name="Seeger M."/>
            <person name="Smith D."/>
            <person name="Spilker T."/>
            <person name="Sul W.J."/>
            <person name="Tsoi T.V."/>
            <person name="Ulrich L.E."/>
            <person name="Zhulin I.B."/>
            <person name="Tiedje J.M."/>
        </authorList>
    </citation>
    <scope>NUCLEOTIDE SEQUENCE [LARGE SCALE GENOMIC DNA]</scope>
    <source>
        <strain>LB400</strain>
    </source>
</reference>
<accession>Q13XD0</accession>
<feature type="chain" id="PRO_1000031130" description="Ribonuclease HII">
    <location>
        <begin position="1"/>
        <end position="248"/>
    </location>
</feature>
<feature type="domain" description="RNase H type-2" evidence="2">
    <location>
        <begin position="29"/>
        <end position="219"/>
    </location>
</feature>
<feature type="binding site" evidence="1">
    <location>
        <position position="35"/>
    </location>
    <ligand>
        <name>a divalent metal cation</name>
        <dbReference type="ChEBI" id="CHEBI:60240"/>
    </ligand>
</feature>
<feature type="binding site" evidence="1">
    <location>
        <position position="36"/>
    </location>
    <ligand>
        <name>a divalent metal cation</name>
        <dbReference type="ChEBI" id="CHEBI:60240"/>
    </ligand>
</feature>
<feature type="binding site" evidence="1">
    <location>
        <position position="128"/>
    </location>
    <ligand>
        <name>a divalent metal cation</name>
        <dbReference type="ChEBI" id="CHEBI:60240"/>
    </ligand>
</feature>
<sequence length="248" mass="26311">MTSARTPRRKTVAGASAQQVGLNFETPDDIVCGVDEAGRGPLAGPVVAAAVIFDPAKPMIRGLDDSKVLTAKKRDELYDKIVDRALAYCIASASVEEIDSLNILHATMLAMKRAVEGLSVVPTLVKIDGNRCPTLSVRSEAVIGGDALVKSISAASILAKVTRDRMLLELHQAHPVYGFNAHAGYGTPQHLAALREHGPCEHHRRSFAPVREAHLRLGTGVPLPAGNVIVVSEVMLDDDAFGERSGAA</sequence>
<gene>
    <name evidence="1" type="primary">rnhB</name>
    <name type="ordered locus">Bxeno_A2721</name>
    <name type="ORF">Bxe_A1696</name>
</gene>
<name>RNH2_PARXL</name>